<dbReference type="EMBL" id="U00090">
    <property type="protein sequence ID" value="AAB91869.1"/>
    <property type="molecule type" value="Genomic_DNA"/>
</dbReference>
<dbReference type="EMBL" id="Z68203">
    <property type="protein sequence ID" value="CAA92398.1"/>
    <property type="molecule type" value="Genomic_DNA"/>
</dbReference>
<dbReference type="RefSeq" id="NP_444082.1">
    <property type="nucleotide sequence ID" value="NC_000914.2"/>
</dbReference>
<dbReference type="RefSeq" id="WP_010875181.1">
    <property type="nucleotide sequence ID" value="NC_000914.2"/>
</dbReference>
<dbReference type="SMR" id="Q53191"/>
<dbReference type="KEGG" id="rhi:NGR_a01430"/>
<dbReference type="PATRIC" id="fig|394.7.peg.129"/>
<dbReference type="eggNOG" id="COG0601">
    <property type="taxonomic scope" value="Bacteria"/>
</dbReference>
<dbReference type="HOGENOM" id="CLU_036879_0_0_5"/>
<dbReference type="OrthoDB" id="9807402at2"/>
<dbReference type="Proteomes" id="UP000001054">
    <property type="component" value="Plasmid pNGR234a"/>
</dbReference>
<dbReference type="GO" id="GO:0005886">
    <property type="term" value="C:plasma membrane"/>
    <property type="evidence" value="ECO:0007669"/>
    <property type="project" value="UniProtKB-SubCell"/>
</dbReference>
<dbReference type="GO" id="GO:0071916">
    <property type="term" value="F:dipeptide transmembrane transporter activity"/>
    <property type="evidence" value="ECO:0007669"/>
    <property type="project" value="TreeGrafter"/>
</dbReference>
<dbReference type="GO" id="GO:0006865">
    <property type="term" value="P:amino acid transport"/>
    <property type="evidence" value="ECO:0007669"/>
    <property type="project" value="UniProtKB-KW"/>
</dbReference>
<dbReference type="CDD" id="cd06261">
    <property type="entry name" value="TM_PBP2"/>
    <property type="match status" value="1"/>
</dbReference>
<dbReference type="Gene3D" id="1.10.3720.10">
    <property type="entry name" value="MetI-like"/>
    <property type="match status" value="1"/>
</dbReference>
<dbReference type="InterPro" id="IPR045621">
    <property type="entry name" value="BPD_transp_1_N"/>
</dbReference>
<dbReference type="InterPro" id="IPR000515">
    <property type="entry name" value="MetI-like"/>
</dbReference>
<dbReference type="InterPro" id="IPR035906">
    <property type="entry name" value="MetI-like_sf"/>
</dbReference>
<dbReference type="PANTHER" id="PTHR43163">
    <property type="entry name" value="DIPEPTIDE TRANSPORT SYSTEM PERMEASE PROTEIN DPPB-RELATED"/>
    <property type="match status" value="1"/>
</dbReference>
<dbReference type="PANTHER" id="PTHR43163:SF6">
    <property type="entry name" value="DIPEPTIDE TRANSPORT SYSTEM PERMEASE PROTEIN DPPB-RELATED"/>
    <property type="match status" value="1"/>
</dbReference>
<dbReference type="Pfam" id="PF00528">
    <property type="entry name" value="BPD_transp_1"/>
    <property type="match status" value="1"/>
</dbReference>
<dbReference type="Pfam" id="PF19300">
    <property type="entry name" value="BPD_transp_1_N"/>
    <property type="match status" value="1"/>
</dbReference>
<dbReference type="SUPFAM" id="SSF161098">
    <property type="entry name" value="MetI-like"/>
    <property type="match status" value="1"/>
</dbReference>
<dbReference type="PROSITE" id="PS50928">
    <property type="entry name" value="ABC_TM1"/>
    <property type="match status" value="1"/>
</dbReference>
<gene>
    <name type="ordered locus">NGR_a01430</name>
    <name type="ORF">y4tP</name>
</gene>
<protein>
    <recommendedName>
        <fullName>Probable peptide ABC transporter permease protein y4tP</fullName>
    </recommendedName>
</protein>
<keyword id="KW-0029">Amino-acid transport</keyword>
<keyword id="KW-0997">Cell inner membrane</keyword>
<keyword id="KW-1003">Cell membrane</keyword>
<keyword id="KW-0472">Membrane</keyword>
<keyword id="KW-0614">Plasmid</keyword>
<keyword id="KW-1185">Reference proteome</keyword>
<keyword id="KW-0812">Transmembrane</keyword>
<keyword id="KW-1133">Transmembrane helix</keyword>
<keyword id="KW-0813">Transport</keyword>
<comment type="function">
    <text>Probably part of the binding-protein-dependent transport system y4tOPQRS for a peptide. Probably responsible for the translocation of the substrate across the membrane.</text>
</comment>
<comment type="subcellular location">
    <subcellularLocation>
        <location evidence="2">Cell inner membrane</location>
        <topology evidence="1">Multi-pass membrane protein</topology>
    </subcellularLocation>
</comment>
<comment type="similarity">
    <text evidence="2">Belongs to the binding-protein-dependent transport system permease family. OppBC subfamily.</text>
</comment>
<geneLocation type="plasmid">
    <name>sym pNGR234a</name>
</geneLocation>
<reference key="1">
    <citation type="journal article" date="1997" name="Nature">
        <title>Molecular basis of symbiosis between Rhizobium and legumes.</title>
        <authorList>
            <person name="Freiberg C.A."/>
            <person name="Fellay R."/>
            <person name="Bairoch A."/>
            <person name="Broughton W.J."/>
            <person name="Rosenthal A."/>
            <person name="Perret X."/>
        </authorList>
    </citation>
    <scope>NUCLEOTIDE SEQUENCE [LARGE SCALE GENOMIC DNA]</scope>
    <source>
        <strain>NBRC 101917 / NGR234</strain>
    </source>
</reference>
<reference key="2">
    <citation type="journal article" date="2009" name="Appl. Environ. Microbiol.">
        <title>Rhizobium sp. strain NGR234 possesses a remarkable number of secretion systems.</title>
        <authorList>
            <person name="Schmeisser C."/>
            <person name="Liesegang H."/>
            <person name="Krysciak D."/>
            <person name="Bakkou N."/>
            <person name="Le Quere A."/>
            <person name="Wollherr A."/>
            <person name="Heinemeyer I."/>
            <person name="Morgenstern B."/>
            <person name="Pommerening-Roeser A."/>
            <person name="Flores M."/>
            <person name="Palacios R."/>
            <person name="Brenner S."/>
            <person name="Gottschalk G."/>
            <person name="Schmitz R.A."/>
            <person name="Broughton W.J."/>
            <person name="Perret X."/>
            <person name="Strittmatter A.W."/>
            <person name="Streit W.R."/>
        </authorList>
    </citation>
    <scope>NUCLEOTIDE SEQUENCE [LARGE SCALE GENOMIC DNA]</scope>
    <source>
        <strain>NBRC 101917 / NGR234</strain>
    </source>
</reference>
<reference key="3">
    <citation type="journal article" date="1996" name="Genome Res.">
        <title>Sequencing the 500-kb GC-rich symbiotic replicon of Rhizobium sp. NGR234 using dye terminators and a thermostable 'sequenase': a beginning.</title>
        <authorList>
            <person name="Freiberg C."/>
            <person name="Perret X."/>
            <person name="Broughton W.J."/>
            <person name="Rosenthal A."/>
        </authorList>
    </citation>
    <scope>NUCLEOTIDE SEQUENCE [GENOMIC DNA] OF 107-313</scope>
</reference>
<feature type="chain" id="PRO_0000060299" description="Probable peptide ABC transporter permease protein y4tP">
    <location>
        <begin position="1"/>
        <end position="313"/>
    </location>
</feature>
<feature type="transmembrane region" description="Helical" evidence="1">
    <location>
        <begin position="9"/>
        <end position="29"/>
    </location>
</feature>
<feature type="transmembrane region" description="Helical" evidence="1">
    <location>
        <begin position="101"/>
        <end position="121"/>
    </location>
</feature>
<feature type="transmembrane region" description="Helical" evidence="1">
    <location>
        <begin position="137"/>
        <end position="157"/>
    </location>
</feature>
<feature type="transmembrane region" description="Helical" evidence="1">
    <location>
        <begin position="177"/>
        <end position="197"/>
    </location>
</feature>
<feature type="transmembrane region" description="Helical" evidence="1">
    <location>
        <begin position="236"/>
        <end position="256"/>
    </location>
</feature>
<feature type="transmembrane region" description="Helical" evidence="1">
    <location>
        <begin position="280"/>
        <end position="300"/>
    </location>
</feature>
<feature type="domain" description="ABC transmembrane type-1" evidence="1">
    <location>
        <begin position="95"/>
        <end position="300"/>
    </location>
</feature>
<evidence type="ECO:0000255" key="1">
    <source>
        <dbReference type="PROSITE-ProRule" id="PRU00441"/>
    </source>
</evidence>
<evidence type="ECO:0000305" key="2"/>
<proteinExistence type="inferred from homology"/>
<accession>Q53191</accession>
<name>Y4TP_SINFN</name>
<sequence length="313" mass="34042">MGVYILRRLVSTIAVMAMVGIFIFLLLRLAPGDPAAVIAGPTATEQMVANIREELGLNEPLPVQFVHWASDVLRGNFGASVFTGVPVLQLLSQRLEPTISLSVLTMILSVTVGVSFGVLAAWRSGGFVDRALATFSAIGYSVPVFVIGYILIYFFAIQTRWLPVQGYTSINQGVAPWFLHLILPTVTLSVPYIAFIARITRGSMLEVLSEDYMRTAAAKGASPFAMLFHHALKNAGVPILTVIGISFAYMIGGVVLTETVFNVPGIGRLVVDAIKNRDYPIIQTVLVLISGLYVLINLLVDLAYTLIDPRIRY</sequence>
<organism>
    <name type="scientific">Sinorhizobium fredii (strain NBRC 101917 / NGR234)</name>
    <dbReference type="NCBI Taxonomy" id="394"/>
    <lineage>
        <taxon>Bacteria</taxon>
        <taxon>Pseudomonadati</taxon>
        <taxon>Pseudomonadota</taxon>
        <taxon>Alphaproteobacteria</taxon>
        <taxon>Hyphomicrobiales</taxon>
        <taxon>Rhizobiaceae</taxon>
        <taxon>Sinorhizobium/Ensifer group</taxon>
        <taxon>Sinorhizobium</taxon>
    </lineage>
</organism>